<keyword id="KW-0963">Cytoplasm</keyword>
<keyword id="KW-0378">Hydrolase</keyword>
<keyword id="KW-0645">Protease</keyword>
<keyword id="KW-0720">Serine protease</keyword>
<accession>Q6G178</accession>
<proteinExistence type="inferred from homology"/>
<evidence type="ECO:0000255" key="1">
    <source>
        <dbReference type="HAMAP-Rule" id="MF_00444"/>
    </source>
</evidence>
<name>CLPP_BARQU</name>
<dbReference type="EC" id="3.4.21.92" evidence="1"/>
<dbReference type="EMBL" id="BX897700">
    <property type="protein sequence ID" value="CAF26003.1"/>
    <property type="molecule type" value="Genomic_DNA"/>
</dbReference>
<dbReference type="RefSeq" id="WP_011179288.1">
    <property type="nucleotide sequence ID" value="NC_005955.1"/>
</dbReference>
<dbReference type="SMR" id="Q6G178"/>
<dbReference type="MEROPS" id="S14.001"/>
<dbReference type="GeneID" id="56533128"/>
<dbReference type="KEGG" id="bqu:BQ05040"/>
<dbReference type="eggNOG" id="COG0740">
    <property type="taxonomic scope" value="Bacteria"/>
</dbReference>
<dbReference type="HOGENOM" id="CLU_058707_3_2_5"/>
<dbReference type="OrthoDB" id="9802800at2"/>
<dbReference type="Proteomes" id="UP000000597">
    <property type="component" value="Chromosome"/>
</dbReference>
<dbReference type="GO" id="GO:0005737">
    <property type="term" value="C:cytoplasm"/>
    <property type="evidence" value="ECO:0007669"/>
    <property type="project" value="UniProtKB-SubCell"/>
</dbReference>
<dbReference type="GO" id="GO:0009368">
    <property type="term" value="C:endopeptidase Clp complex"/>
    <property type="evidence" value="ECO:0007669"/>
    <property type="project" value="TreeGrafter"/>
</dbReference>
<dbReference type="GO" id="GO:0004176">
    <property type="term" value="F:ATP-dependent peptidase activity"/>
    <property type="evidence" value="ECO:0007669"/>
    <property type="project" value="InterPro"/>
</dbReference>
<dbReference type="GO" id="GO:0051117">
    <property type="term" value="F:ATPase binding"/>
    <property type="evidence" value="ECO:0007669"/>
    <property type="project" value="TreeGrafter"/>
</dbReference>
<dbReference type="GO" id="GO:0004252">
    <property type="term" value="F:serine-type endopeptidase activity"/>
    <property type="evidence" value="ECO:0007669"/>
    <property type="project" value="UniProtKB-UniRule"/>
</dbReference>
<dbReference type="GO" id="GO:0006515">
    <property type="term" value="P:protein quality control for misfolded or incompletely synthesized proteins"/>
    <property type="evidence" value="ECO:0007669"/>
    <property type="project" value="TreeGrafter"/>
</dbReference>
<dbReference type="CDD" id="cd07017">
    <property type="entry name" value="S14_ClpP_2"/>
    <property type="match status" value="1"/>
</dbReference>
<dbReference type="FunFam" id="3.90.226.10:FF:000001">
    <property type="entry name" value="ATP-dependent Clp protease proteolytic subunit"/>
    <property type="match status" value="1"/>
</dbReference>
<dbReference type="Gene3D" id="3.90.226.10">
    <property type="entry name" value="2-enoyl-CoA Hydratase, Chain A, domain 1"/>
    <property type="match status" value="1"/>
</dbReference>
<dbReference type="HAMAP" id="MF_00444">
    <property type="entry name" value="ClpP"/>
    <property type="match status" value="1"/>
</dbReference>
<dbReference type="InterPro" id="IPR001907">
    <property type="entry name" value="ClpP"/>
</dbReference>
<dbReference type="InterPro" id="IPR029045">
    <property type="entry name" value="ClpP/crotonase-like_dom_sf"/>
</dbReference>
<dbReference type="InterPro" id="IPR023562">
    <property type="entry name" value="ClpP/TepA"/>
</dbReference>
<dbReference type="InterPro" id="IPR033135">
    <property type="entry name" value="ClpP_His_AS"/>
</dbReference>
<dbReference type="InterPro" id="IPR018215">
    <property type="entry name" value="ClpP_Ser_AS"/>
</dbReference>
<dbReference type="NCBIfam" id="TIGR00493">
    <property type="entry name" value="clpP"/>
    <property type="match status" value="1"/>
</dbReference>
<dbReference type="NCBIfam" id="NF001368">
    <property type="entry name" value="PRK00277.1"/>
    <property type="match status" value="1"/>
</dbReference>
<dbReference type="NCBIfam" id="NF009205">
    <property type="entry name" value="PRK12553.1"/>
    <property type="match status" value="1"/>
</dbReference>
<dbReference type="PANTHER" id="PTHR10381">
    <property type="entry name" value="ATP-DEPENDENT CLP PROTEASE PROTEOLYTIC SUBUNIT"/>
    <property type="match status" value="1"/>
</dbReference>
<dbReference type="PANTHER" id="PTHR10381:SF70">
    <property type="entry name" value="ATP-DEPENDENT CLP PROTEASE PROTEOLYTIC SUBUNIT"/>
    <property type="match status" value="1"/>
</dbReference>
<dbReference type="Pfam" id="PF00574">
    <property type="entry name" value="CLP_protease"/>
    <property type="match status" value="1"/>
</dbReference>
<dbReference type="PRINTS" id="PR00127">
    <property type="entry name" value="CLPPROTEASEP"/>
</dbReference>
<dbReference type="SUPFAM" id="SSF52096">
    <property type="entry name" value="ClpP/crotonase"/>
    <property type="match status" value="1"/>
</dbReference>
<dbReference type="PROSITE" id="PS00382">
    <property type="entry name" value="CLP_PROTEASE_HIS"/>
    <property type="match status" value="1"/>
</dbReference>
<dbReference type="PROSITE" id="PS00381">
    <property type="entry name" value="CLP_PROTEASE_SER"/>
    <property type="match status" value="1"/>
</dbReference>
<protein>
    <recommendedName>
        <fullName evidence="1">ATP-dependent Clp protease proteolytic subunit</fullName>
        <ecNumber evidence="1">3.4.21.92</ecNumber>
    </recommendedName>
    <alternativeName>
        <fullName evidence="1">Endopeptidase Clp</fullName>
    </alternativeName>
</protein>
<gene>
    <name evidence="1" type="primary">clpP</name>
    <name type="ordered locus">BQ05040</name>
</gene>
<sequence length="210" mass="23641">MSNPMKTALSLVPMVIEQTNRGERAYDIFSRLLKERIIFINGPVEDSMAMLVCAQLLFLEAENPKKEISLYINSPGGVVTSGMAIYDTMQFIRPPVSTLCMGQAASMGSLLLTAGAKGHRFTLPNARIMVHQPSGGFQGQASDIERHAQDIIKMKRRLNEIYVQHTGQDYEVIERTLDRDHFMTAEEAKQFGLVDDVIQYRAETEKEEKD</sequence>
<comment type="function">
    <text evidence="1">Cleaves peptides in various proteins in a process that requires ATP hydrolysis. Has a chymotrypsin-like activity. Plays a major role in the degradation of misfolded proteins.</text>
</comment>
<comment type="catalytic activity">
    <reaction evidence="1">
        <text>Hydrolysis of proteins to small peptides in the presence of ATP and magnesium. alpha-casein is the usual test substrate. In the absence of ATP, only oligopeptides shorter than five residues are hydrolyzed (such as succinyl-Leu-Tyr-|-NHMec, and Leu-Tyr-Leu-|-Tyr-Trp, in which cleavage of the -Tyr-|-Leu- and -Tyr-|-Trp bonds also occurs).</text>
        <dbReference type="EC" id="3.4.21.92"/>
    </reaction>
</comment>
<comment type="subunit">
    <text evidence="1">Fourteen ClpP subunits assemble into 2 heptameric rings which stack back to back to give a disk-like structure with a central cavity, resembling the structure of eukaryotic proteasomes.</text>
</comment>
<comment type="subcellular location">
    <subcellularLocation>
        <location evidence="1">Cytoplasm</location>
    </subcellularLocation>
</comment>
<comment type="similarity">
    <text evidence="1">Belongs to the peptidase S14 family.</text>
</comment>
<organism>
    <name type="scientific">Bartonella quintana (strain Toulouse)</name>
    <name type="common">Rochalimaea quintana</name>
    <dbReference type="NCBI Taxonomy" id="283165"/>
    <lineage>
        <taxon>Bacteria</taxon>
        <taxon>Pseudomonadati</taxon>
        <taxon>Pseudomonadota</taxon>
        <taxon>Alphaproteobacteria</taxon>
        <taxon>Hyphomicrobiales</taxon>
        <taxon>Bartonellaceae</taxon>
        <taxon>Bartonella</taxon>
    </lineage>
</organism>
<feature type="chain" id="PRO_0000179504" description="ATP-dependent Clp protease proteolytic subunit">
    <location>
        <begin position="1"/>
        <end position="210"/>
    </location>
</feature>
<feature type="active site" description="Nucleophile" evidence="1">
    <location>
        <position position="106"/>
    </location>
</feature>
<feature type="active site" evidence="1">
    <location>
        <position position="131"/>
    </location>
</feature>
<reference key="1">
    <citation type="journal article" date="2004" name="Proc. Natl. Acad. Sci. U.S.A.">
        <title>The louse-borne human pathogen Bartonella quintana is a genomic derivative of the zoonotic agent Bartonella henselae.</title>
        <authorList>
            <person name="Alsmark U.C.M."/>
            <person name="Frank A.C."/>
            <person name="Karlberg E.O."/>
            <person name="Legault B.-A."/>
            <person name="Ardell D.H."/>
            <person name="Canbaeck B."/>
            <person name="Eriksson A.-S."/>
            <person name="Naeslund A.K."/>
            <person name="Handley S.A."/>
            <person name="Huvet M."/>
            <person name="La Scola B."/>
            <person name="Holmberg M."/>
            <person name="Andersson S.G.E."/>
        </authorList>
    </citation>
    <scope>NUCLEOTIDE SEQUENCE [LARGE SCALE GENOMIC DNA]</scope>
    <source>
        <strain>Toulouse</strain>
    </source>
</reference>